<organism>
    <name type="scientific">Mycolicibacterium paratuberculosis (strain ATCC BAA-968 / K-10)</name>
    <name type="common">Mycobacterium paratuberculosis</name>
    <dbReference type="NCBI Taxonomy" id="262316"/>
    <lineage>
        <taxon>Bacteria</taxon>
        <taxon>Bacillati</taxon>
        <taxon>Actinomycetota</taxon>
        <taxon>Actinomycetes</taxon>
        <taxon>Mycobacteriales</taxon>
        <taxon>Mycobacteriaceae</taxon>
        <taxon>Mycobacterium</taxon>
        <taxon>Mycobacterium avium complex (MAC)</taxon>
    </lineage>
</organism>
<gene>
    <name evidence="1" type="primary">rnz</name>
    <name type="ordered locus">MAP_2220</name>
</gene>
<keyword id="KW-0255">Endonuclease</keyword>
<keyword id="KW-0378">Hydrolase</keyword>
<keyword id="KW-0479">Metal-binding</keyword>
<keyword id="KW-0540">Nuclease</keyword>
<keyword id="KW-1185">Reference proteome</keyword>
<keyword id="KW-0819">tRNA processing</keyword>
<keyword id="KW-0862">Zinc</keyword>
<name>RNZ_MYCPA</name>
<comment type="function">
    <text evidence="1">Zinc phosphodiesterase, which displays some tRNA 3'-processing endonuclease activity. Probably involved in tRNA maturation, by removing a 3'-trailer from precursor tRNA.</text>
</comment>
<comment type="catalytic activity">
    <reaction evidence="1">
        <text>Endonucleolytic cleavage of RNA, removing extra 3' nucleotides from tRNA precursor, generating 3' termini of tRNAs. A 3'-hydroxy group is left at the tRNA terminus and a 5'-phosphoryl group is left at the trailer molecule.</text>
        <dbReference type="EC" id="3.1.26.11"/>
    </reaction>
</comment>
<comment type="cofactor">
    <cofactor evidence="1">
        <name>Zn(2+)</name>
        <dbReference type="ChEBI" id="CHEBI:29105"/>
    </cofactor>
    <text evidence="1">Binds 2 Zn(2+) ions.</text>
</comment>
<comment type="subunit">
    <text evidence="1">Homodimer.</text>
</comment>
<comment type="similarity">
    <text evidence="1">Belongs to the RNase Z family.</text>
</comment>
<protein>
    <recommendedName>
        <fullName evidence="1">Ribonuclease Z</fullName>
        <shortName evidence="1">RNase Z</shortName>
        <ecNumber evidence="1">3.1.26.11</ecNumber>
    </recommendedName>
    <alternativeName>
        <fullName evidence="1">tRNA 3 endonuclease</fullName>
    </alternativeName>
    <alternativeName>
        <fullName evidence="1">tRNase Z</fullName>
    </alternativeName>
</protein>
<feature type="chain" id="PRO_0000155878" description="Ribonuclease Z">
    <location>
        <begin position="1"/>
        <end position="280"/>
    </location>
</feature>
<feature type="active site" description="Proton acceptor" evidence="1">
    <location>
        <position position="65"/>
    </location>
</feature>
<feature type="binding site" evidence="1">
    <location>
        <position position="61"/>
    </location>
    <ligand>
        <name>Zn(2+)</name>
        <dbReference type="ChEBI" id="CHEBI:29105"/>
        <label>1</label>
        <note>catalytic</note>
    </ligand>
</feature>
<feature type="binding site" evidence="1">
    <location>
        <position position="63"/>
    </location>
    <ligand>
        <name>Zn(2+)</name>
        <dbReference type="ChEBI" id="CHEBI:29105"/>
        <label>1</label>
        <note>catalytic</note>
    </ligand>
</feature>
<feature type="binding site" evidence="1">
    <location>
        <position position="65"/>
    </location>
    <ligand>
        <name>Zn(2+)</name>
        <dbReference type="ChEBI" id="CHEBI:29105"/>
        <label>2</label>
        <note>catalytic</note>
    </ligand>
</feature>
<feature type="binding site" evidence="1">
    <location>
        <position position="66"/>
    </location>
    <ligand>
        <name>Zn(2+)</name>
        <dbReference type="ChEBI" id="CHEBI:29105"/>
        <label>2</label>
        <note>catalytic</note>
    </ligand>
</feature>
<feature type="binding site" evidence="1">
    <location>
        <position position="153"/>
    </location>
    <ligand>
        <name>Zn(2+)</name>
        <dbReference type="ChEBI" id="CHEBI:29105"/>
        <label>1</label>
        <note>catalytic</note>
    </ligand>
</feature>
<feature type="binding site" evidence="1">
    <location>
        <position position="176"/>
    </location>
    <ligand>
        <name>Zn(2+)</name>
        <dbReference type="ChEBI" id="CHEBI:29105"/>
        <label>1</label>
        <note>catalytic</note>
    </ligand>
</feature>
<feature type="binding site" evidence="1">
    <location>
        <position position="176"/>
    </location>
    <ligand>
        <name>Zn(2+)</name>
        <dbReference type="ChEBI" id="CHEBI:29105"/>
        <label>2</label>
        <note>catalytic</note>
    </ligand>
</feature>
<feature type="binding site" evidence="1">
    <location>
        <position position="240"/>
    </location>
    <ligand>
        <name>Zn(2+)</name>
        <dbReference type="ChEBI" id="CHEBI:29105"/>
        <label>2</label>
        <note>catalytic</note>
    </ligand>
</feature>
<accession>Q73XT9</accession>
<dbReference type="EC" id="3.1.26.11" evidence="1"/>
<dbReference type="EMBL" id="AE016958">
    <property type="protein sequence ID" value="AAS04537.1"/>
    <property type="molecule type" value="Genomic_DNA"/>
</dbReference>
<dbReference type="RefSeq" id="WP_003875910.1">
    <property type="nucleotide sequence ID" value="NZ_CP106873.1"/>
</dbReference>
<dbReference type="SMR" id="Q73XT9"/>
<dbReference type="STRING" id="262316.MAP_2220"/>
<dbReference type="KEGG" id="mpa:MAP_2220"/>
<dbReference type="PATRIC" id="fig|262316.17.peg.2360"/>
<dbReference type="eggNOG" id="COG1234">
    <property type="taxonomic scope" value="Bacteria"/>
</dbReference>
<dbReference type="HOGENOM" id="CLU_031317_0_0_11"/>
<dbReference type="Proteomes" id="UP000000580">
    <property type="component" value="Chromosome"/>
</dbReference>
<dbReference type="GO" id="GO:0042781">
    <property type="term" value="F:3'-tRNA processing endoribonuclease activity"/>
    <property type="evidence" value="ECO:0007669"/>
    <property type="project" value="UniProtKB-UniRule"/>
</dbReference>
<dbReference type="GO" id="GO:0046872">
    <property type="term" value="F:metal ion binding"/>
    <property type="evidence" value="ECO:0007669"/>
    <property type="project" value="UniProtKB-KW"/>
</dbReference>
<dbReference type="CDD" id="cd07719">
    <property type="entry name" value="arylsulfatase_AtsA-like_MBL-fold"/>
    <property type="match status" value="1"/>
</dbReference>
<dbReference type="Gene3D" id="3.60.15.10">
    <property type="entry name" value="Ribonuclease Z/Hydroxyacylglutathione hydrolase-like"/>
    <property type="match status" value="1"/>
</dbReference>
<dbReference type="HAMAP" id="MF_01818">
    <property type="entry name" value="RNase_Z_BN"/>
    <property type="match status" value="1"/>
</dbReference>
<dbReference type="InterPro" id="IPR044094">
    <property type="entry name" value="AtsA-like_MBL-fold"/>
</dbReference>
<dbReference type="InterPro" id="IPR001279">
    <property type="entry name" value="Metallo-B-lactamas"/>
</dbReference>
<dbReference type="InterPro" id="IPR036866">
    <property type="entry name" value="RibonucZ/Hydroxyglut_hydro"/>
</dbReference>
<dbReference type="InterPro" id="IPR013471">
    <property type="entry name" value="RNase_Z/BN"/>
</dbReference>
<dbReference type="NCBIfam" id="NF000806">
    <property type="entry name" value="PRK00055.2-4"/>
    <property type="match status" value="1"/>
</dbReference>
<dbReference type="PANTHER" id="PTHR46018">
    <property type="entry name" value="ZINC PHOSPHODIESTERASE ELAC PROTEIN 1"/>
    <property type="match status" value="1"/>
</dbReference>
<dbReference type="PANTHER" id="PTHR46018:SF2">
    <property type="entry name" value="ZINC PHOSPHODIESTERASE ELAC PROTEIN 1"/>
    <property type="match status" value="1"/>
</dbReference>
<dbReference type="Pfam" id="PF12706">
    <property type="entry name" value="Lactamase_B_2"/>
    <property type="match status" value="1"/>
</dbReference>
<dbReference type="SMART" id="SM00849">
    <property type="entry name" value="Lactamase_B"/>
    <property type="match status" value="1"/>
</dbReference>
<dbReference type="SUPFAM" id="SSF56281">
    <property type="entry name" value="Metallo-hydrolase/oxidoreductase"/>
    <property type="match status" value="1"/>
</dbReference>
<proteinExistence type="inferred from homology"/>
<evidence type="ECO:0000255" key="1">
    <source>
        <dbReference type="HAMAP-Rule" id="MF_01818"/>
    </source>
</evidence>
<sequence>MIEVTLLGTGSPIPDPNRAGPSTLVRAGGQVFLVDCGRGVLQRAAAGGVGAAGLSALLLTHLHSDHVGDLGDVLITRWISTFTPDPVPLPIIGPPGTAELVAATLNALRHDIGYRIAHHADLNAPPAVDVREHTDGPVWDRDGVSIRVAPTDHRPVAPTIGFRVEYQGASVVLAGDTVPCAGLDELAAGAGALVHTVIRKDIVATIPQQRLQDICDYHSSVEEAAATAARAGVGTLVMTHYVPALVAGQEEQWRALAAREFAGRVELGDDLHRVQVDAPS</sequence>
<reference key="1">
    <citation type="journal article" date="2005" name="Proc. Natl. Acad. Sci. U.S.A.">
        <title>The complete genome sequence of Mycobacterium avium subspecies paratuberculosis.</title>
        <authorList>
            <person name="Li L."/>
            <person name="Bannantine J.P."/>
            <person name="Zhang Q."/>
            <person name="Amonsin A."/>
            <person name="May B.J."/>
            <person name="Alt D."/>
            <person name="Banerji N."/>
            <person name="Kanjilal S."/>
            <person name="Kapur V."/>
        </authorList>
    </citation>
    <scope>NUCLEOTIDE SEQUENCE [LARGE SCALE GENOMIC DNA]</scope>
    <source>
        <strain>ATCC BAA-968 / K-10</strain>
    </source>
</reference>